<reference key="1">
    <citation type="journal article" date="1992" name="Nucleic Acids Res.">
        <title>Euplotes crassus has genes encoding telomere-binding proteins and telomere-binding protein homologs.</title>
        <authorList>
            <person name="Wang W."/>
            <person name="Skopp R."/>
            <person name="Scofield M."/>
            <person name="Price C."/>
        </authorList>
    </citation>
    <scope>NUCLEOTIDE SEQUENCE [GENOMIC DNA]</scope>
    <scope>PARTIAL PROTEIN SEQUENCE</scope>
</reference>
<sequence>MPKQKAAKKDHYQYSDLSSIKKEGEEDQYHFYGVVIDASFPYKGEKRYVVTCKVADPSSVAKGGKLNTVNVVFFSQNFEDLPIIQRVGDIVRVHRARLQHYNDAKQLNVNMYYRSSWCLFIGNDKEAPLEPKVENEDGTNNYFSYTPYNFSGKSFTQEGHETKILKDLKKWSKDYFSNNDVVEQVKKADIETAMKNKTDFDLLAKVTEISDNDQYTNTVSLNDSTGQTWTGHLFKRKFPHLVKGDVLRIKSVSAKEDNSLIFSSHSNILKFFSFSSIHKKLKSSISSDTHIKTCVTKIDKAAHNKMDITPLKKLFFNPKKSEKLFRSQFSVLKVDTKNLEDYVGAFDGKKWHSYKGKKTPKDAELRWNIKLIVTDYKNQQDDKAYMIHLDDNSFFKGINPANWSNAATKKKAEKAFSVLTNNKVNYVDAILERDKKNYHIRHTQFK</sequence>
<keyword id="KW-0158">Chromosome</keyword>
<keyword id="KW-0903">Direct protein sequencing</keyword>
<keyword id="KW-0238">DNA-binding</keyword>
<keyword id="KW-0539">Nucleus</keyword>
<keyword id="KW-0779">Telomere</keyword>
<protein>
    <recommendedName>
        <fullName>Telomere-binding protein 51 kDa subunit</fullName>
    </recommendedName>
</protein>
<proteinExistence type="evidence at protein level"/>
<name>TEB_EUPCR</name>
<feature type="chain" id="PRO_0000121733" description="Telomere-binding protein 51 kDa subunit">
    <location>
        <begin position="1"/>
        <end position="446"/>
    </location>
</feature>
<accession>Q06184</accession>
<organism>
    <name type="scientific">Euplotes crassus</name>
    <dbReference type="NCBI Taxonomy" id="5936"/>
    <lineage>
        <taxon>Eukaryota</taxon>
        <taxon>Sar</taxon>
        <taxon>Alveolata</taxon>
        <taxon>Ciliophora</taxon>
        <taxon>Intramacronucleata</taxon>
        <taxon>Spirotrichea</taxon>
        <taxon>Hypotrichia</taxon>
        <taxon>Euplotida</taxon>
        <taxon>Euplotidae</taxon>
        <taxon>Moneuplotes</taxon>
    </lineage>
</organism>
<dbReference type="EMBL" id="M96818">
    <property type="protein sequence ID" value="AAA29127.1"/>
    <property type="molecule type" value="Genomic_DNA"/>
</dbReference>
<dbReference type="PIR" id="S35524">
    <property type="entry name" value="S35524"/>
</dbReference>
<dbReference type="SMR" id="Q06184"/>
<dbReference type="GO" id="GO:0000783">
    <property type="term" value="C:nuclear telomere cap complex"/>
    <property type="evidence" value="ECO:0007669"/>
    <property type="project" value="TreeGrafter"/>
</dbReference>
<dbReference type="GO" id="GO:0098505">
    <property type="term" value="F:G-rich strand telomeric DNA binding"/>
    <property type="evidence" value="ECO:0007669"/>
    <property type="project" value="TreeGrafter"/>
</dbReference>
<dbReference type="GO" id="GO:0010521">
    <property type="term" value="F:telomerase inhibitor activity"/>
    <property type="evidence" value="ECO:0007669"/>
    <property type="project" value="TreeGrafter"/>
</dbReference>
<dbReference type="GO" id="GO:0032210">
    <property type="term" value="P:regulation of telomere maintenance via telomerase"/>
    <property type="evidence" value="ECO:0007669"/>
    <property type="project" value="TreeGrafter"/>
</dbReference>
<dbReference type="GO" id="GO:0016233">
    <property type="term" value="P:telomere capping"/>
    <property type="evidence" value="ECO:0007669"/>
    <property type="project" value="InterPro"/>
</dbReference>
<dbReference type="CDD" id="cd04497">
    <property type="entry name" value="hPOT1_OB1_like"/>
    <property type="match status" value="1"/>
</dbReference>
<dbReference type="Gene3D" id="2.40.50.140">
    <property type="entry name" value="Nucleic acid-binding proteins"/>
    <property type="match status" value="3"/>
</dbReference>
<dbReference type="InterPro" id="IPR012340">
    <property type="entry name" value="NA-bd_OB-fold"/>
</dbReference>
<dbReference type="InterPro" id="IPR028389">
    <property type="entry name" value="POT1"/>
</dbReference>
<dbReference type="InterPro" id="IPR053979">
    <property type="entry name" value="TEBP-like_OB2"/>
</dbReference>
<dbReference type="InterPro" id="IPR011564">
    <property type="entry name" value="Telomer_end-bd_POT1/Cdc13"/>
</dbReference>
<dbReference type="InterPro" id="IPR003415">
    <property type="entry name" value="Telomere-bd_alpha"/>
</dbReference>
<dbReference type="PANTHER" id="PTHR14513">
    <property type="entry name" value="PROTECTION OF TELOMERES 1"/>
    <property type="match status" value="1"/>
</dbReference>
<dbReference type="PANTHER" id="PTHR14513:SF0">
    <property type="entry name" value="PROTECTION OF TELOMERES PROTEIN 1"/>
    <property type="match status" value="1"/>
</dbReference>
<dbReference type="Pfam" id="PF02765">
    <property type="entry name" value="POT1"/>
    <property type="match status" value="1"/>
</dbReference>
<dbReference type="Pfam" id="PF22236">
    <property type="entry name" value="TEBP_OB2-like"/>
    <property type="match status" value="1"/>
</dbReference>
<dbReference type="PIRSF" id="PIRSF015848">
    <property type="entry name" value="TEBP_alpha"/>
    <property type="match status" value="1"/>
</dbReference>
<dbReference type="SMART" id="SM00976">
    <property type="entry name" value="Telo_bind"/>
    <property type="match status" value="1"/>
</dbReference>
<dbReference type="SUPFAM" id="SSF50249">
    <property type="entry name" value="Nucleic acid-binding proteins"/>
    <property type="match status" value="3"/>
</dbReference>
<comment type="function">
    <text>May function as protective capping of the single-stranded telomeric overhang. May also participate in telomere length regulation during DNA replication. Binds specifically to the T4G4-containing extension on the 3'strand and protects this region of the telomere from nuclease digestion and chemical modification.</text>
</comment>
<comment type="subunit">
    <text>Monomer.</text>
</comment>
<comment type="subcellular location">
    <subcellularLocation>
        <location>Nucleus</location>
    </subcellularLocation>
    <subcellularLocation>
        <location>Chromosome</location>
        <location>Telomere</location>
    </subcellularLocation>
</comment>
<comment type="similarity">
    <text evidence="1">Belongs to the telombin family.</text>
</comment>
<evidence type="ECO:0000305" key="1"/>